<comment type="function">
    <text evidence="1">Participates actively in the response to hyperosmotic and heat shock by preventing the aggregation of stress-denatured proteins and by disaggregating proteins, also in an autonomous, DnaK-independent fashion. Unfolded proteins bind initially to DnaJ; upon interaction with the DnaJ-bound protein, DnaK hydrolyzes its bound ATP, resulting in the formation of a stable complex. GrpE releases ADP from DnaK; ATP binding to DnaK triggers the release of the substrate protein, thus completing the reaction cycle. Several rounds of ATP-dependent interactions between DnaJ, DnaK and GrpE are required for fully efficient folding. Also involved, together with DnaK and GrpE, in the DNA replication of plasmids through activation of initiation proteins.</text>
</comment>
<comment type="cofactor">
    <cofactor evidence="1">
        <name>Zn(2+)</name>
        <dbReference type="ChEBI" id="CHEBI:29105"/>
    </cofactor>
    <text evidence="1">Binds 2 Zn(2+) ions per monomer.</text>
</comment>
<comment type="subunit">
    <text evidence="1">Homodimer.</text>
</comment>
<comment type="subcellular location">
    <subcellularLocation>
        <location evidence="1">Cytoplasm</location>
    </subcellularLocation>
</comment>
<comment type="domain">
    <text evidence="1">The J domain is necessary and sufficient to stimulate DnaK ATPase activity. Zinc center 1 plays an important role in the autonomous, DnaK-independent chaperone activity of DnaJ. Zinc center 2 is essential for interaction with DnaK and for DnaJ activity.</text>
</comment>
<comment type="similarity">
    <text evidence="1">Belongs to the DnaJ family.</text>
</comment>
<feature type="chain" id="PRO_1000085199" description="Chaperone protein DnaJ">
    <location>
        <begin position="1"/>
        <end position="381"/>
    </location>
</feature>
<feature type="domain" description="J" evidence="1">
    <location>
        <begin position="5"/>
        <end position="69"/>
    </location>
</feature>
<feature type="repeat" description="CXXCXGXG motif">
    <location>
        <begin position="149"/>
        <end position="156"/>
    </location>
</feature>
<feature type="repeat" description="CXXCXGXG motif">
    <location>
        <begin position="166"/>
        <end position="173"/>
    </location>
</feature>
<feature type="repeat" description="CXXCXGXG motif">
    <location>
        <begin position="192"/>
        <end position="199"/>
    </location>
</feature>
<feature type="repeat" description="CXXCXGXG motif">
    <location>
        <begin position="206"/>
        <end position="213"/>
    </location>
</feature>
<feature type="zinc finger region" description="CR-type" evidence="1">
    <location>
        <begin position="136"/>
        <end position="218"/>
    </location>
</feature>
<feature type="region of interest" description="Disordered" evidence="2">
    <location>
        <begin position="154"/>
        <end position="174"/>
    </location>
</feature>
<feature type="binding site" evidence="1">
    <location>
        <position position="149"/>
    </location>
    <ligand>
        <name>Zn(2+)</name>
        <dbReference type="ChEBI" id="CHEBI:29105"/>
        <label>1</label>
    </ligand>
</feature>
<feature type="binding site" evidence="1">
    <location>
        <position position="152"/>
    </location>
    <ligand>
        <name>Zn(2+)</name>
        <dbReference type="ChEBI" id="CHEBI:29105"/>
        <label>1</label>
    </ligand>
</feature>
<feature type="binding site" evidence="1">
    <location>
        <position position="166"/>
    </location>
    <ligand>
        <name>Zn(2+)</name>
        <dbReference type="ChEBI" id="CHEBI:29105"/>
        <label>2</label>
    </ligand>
</feature>
<feature type="binding site" evidence="1">
    <location>
        <position position="169"/>
    </location>
    <ligand>
        <name>Zn(2+)</name>
        <dbReference type="ChEBI" id="CHEBI:29105"/>
        <label>2</label>
    </ligand>
</feature>
<feature type="binding site" evidence="1">
    <location>
        <position position="192"/>
    </location>
    <ligand>
        <name>Zn(2+)</name>
        <dbReference type="ChEBI" id="CHEBI:29105"/>
        <label>2</label>
    </ligand>
</feature>
<feature type="binding site" evidence="1">
    <location>
        <position position="195"/>
    </location>
    <ligand>
        <name>Zn(2+)</name>
        <dbReference type="ChEBI" id="CHEBI:29105"/>
        <label>2</label>
    </ligand>
</feature>
<feature type="binding site" evidence="1">
    <location>
        <position position="206"/>
    </location>
    <ligand>
        <name>Zn(2+)</name>
        <dbReference type="ChEBI" id="CHEBI:29105"/>
        <label>1</label>
    </ligand>
</feature>
<feature type="binding site" evidence="1">
    <location>
        <position position="209"/>
    </location>
    <ligand>
        <name>Zn(2+)</name>
        <dbReference type="ChEBI" id="CHEBI:29105"/>
        <label>1</label>
    </ligand>
</feature>
<dbReference type="EMBL" id="CP000557">
    <property type="protein sequence ID" value="ABO67784.1"/>
    <property type="molecule type" value="Genomic_DNA"/>
</dbReference>
<dbReference type="RefSeq" id="WP_008879918.1">
    <property type="nucleotide sequence ID" value="NC_009328.1"/>
</dbReference>
<dbReference type="SMR" id="A4IR30"/>
<dbReference type="GeneID" id="87623413"/>
<dbReference type="KEGG" id="gtn:GTNG_2439"/>
<dbReference type="eggNOG" id="COG0484">
    <property type="taxonomic scope" value="Bacteria"/>
</dbReference>
<dbReference type="HOGENOM" id="CLU_017633_0_7_9"/>
<dbReference type="Proteomes" id="UP000001578">
    <property type="component" value="Chromosome"/>
</dbReference>
<dbReference type="GO" id="GO:0005737">
    <property type="term" value="C:cytoplasm"/>
    <property type="evidence" value="ECO:0007669"/>
    <property type="project" value="UniProtKB-SubCell"/>
</dbReference>
<dbReference type="GO" id="GO:0005524">
    <property type="term" value="F:ATP binding"/>
    <property type="evidence" value="ECO:0007669"/>
    <property type="project" value="InterPro"/>
</dbReference>
<dbReference type="GO" id="GO:0031072">
    <property type="term" value="F:heat shock protein binding"/>
    <property type="evidence" value="ECO:0007669"/>
    <property type="project" value="InterPro"/>
</dbReference>
<dbReference type="GO" id="GO:0051082">
    <property type="term" value="F:unfolded protein binding"/>
    <property type="evidence" value="ECO:0007669"/>
    <property type="project" value="UniProtKB-UniRule"/>
</dbReference>
<dbReference type="GO" id="GO:0008270">
    <property type="term" value="F:zinc ion binding"/>
    <property type="evidence" value="ECO:0007669"/>
    <property type="project" value="UniProtKB-UniRule"/>
</dbReference>
<dbReference type="GO" id="GO:0051085">
    <property type="term" value="P:chaperone cofactor-dependent protein refolding"/>
    <property type="evidence" value="ECO:0007669"/>
    <property type="project" value="TreeGrafter"/>
</dbReference>
<dbReference type="GO" id="GO:0006260">
    <property type="term" value="P:DNA replication"/>
    <property type="evidence" value="ECO:0007669"/>
    <property type="project" value="UniProtKB-KW"/>
</dbReference>
<dbReference type="GO" id="GO:0042026">
    <property type="term" value="P:protein refolding"/>
    <property type="evidence" value="ECO:0007669"/>
    <property type="project" value="TreeGrafter"/>
</dbReference>
<dbReference type="GO" id="GO:0009408">
    <property type="term" value="P:response to heat"/>
    <property type="evidence" value="ECO:0007669"/>
    <property type="project" value="InterPro"/>
</dbReference>
<dbReference type="CDD" id="cd06257">
    <property type="entry name" value="DnaJ"/>
    <property type="match status" value="1"/>
</dbReference>
<dbReference type="CDD" id="cd10747">
    <property type="entry name" value="DnaJ_C"/>
    <property type="match status" value="1"/>
</dbReference>
<dbReference type="CDD" id="cd10719">
    <property type="entry name" value="DnaJ_zf"/>
    <property type="match status" value="1"/>
</dbReference>
<dbReference type="FunFam" id="1.10.287.110:FF:000031">
    <property type="entry name" value="Molecular chaperone DnaJ"/>
    <property type="match status" value="1"/>
</dbReference>
<dbReference type="FunFam" id="2.10.230.10:FF:000002">
    <property type="entry name" value="Molecular chaperone DnaJ"/>
    <property type="match status" value="1"/>
</dbReference>
<dbReference type="FunFam" id="2.60.260.20:FF:000004">
    <property type="entry name" value="Molecular chaperone DnaJ"/>
    <property type="match status" value="1"/>
</dbReference>
<dbReference type="FunFam" id="2.60.260.20:FF:000009">
    <property type="entry name" value="Putative Mitochondrial DnaJ chaperone"/>
    <property type="match status" value="1"/>
</dbReference>
<dbReference type="Gene3D" id="1.10.287.110">
    <property type="entry name" value="DnaJ domain"/>
    <property type="match status" value="1"/>
</dbReference>
<dbReference type="Gene3D" id="2.10.230.10">
    <property type="entry name" value="Heat shock protein DnaJ, cysteine-rich domain"/>
    <property type="match status" value="1"/>
</dbReference>
<dbReference type="Gene3D" id="2.60.260.20">
    <property type="entry name" value="Urease metallochaperone UreE, N-terminal domain"/>
    <property type="match status" value="2"/>
</dbReference>
<dbReference type="HAMAP" id="MF_01152">
    <property type="entry name" value="DnaJ"/>
    <property type="match status" value="1"/>
</dbReference>
<dbReference type="InterPro" id="IPR012724">
    <property type="entry name" value="DnaJ"/>
</dbReference>
<dbReference type="InterPro" id="IPR002939">
    <property type="entry name" value="DnaJ_C"/>
</dbReference>
<dbReference type="InterPro" id="IPR001623">
    <property type="entry name" value="DnaJ_domain"/>
</dbReference>
<dbReference type="InterPro" id="IPR018253">
    <property type="entry name" value="DnaJ_domain_CS"/>
</dbReference>
<dbReference type="InterPro" id="IPR008971">
    <property type="entry name" value="HSP40/DnaJ_pept-bd"/>
</dbReference>
<dbReference type="InterPro" id="IPR001305">
    <property type="entry name" value="HSP_DnaJ_Cys-rich_dom"/>
</dbReference>
<dbReference type="InterPro" id="IPR036410">
    <property type="entry name" value="HSP_DnaJ_Cys-rich_dom_sf"/>
</dbReference>
<dbReference type="InterPro" id="IPR036869">
    <property type="entry name" value="J_dom_sf"/>
</dbReference>
<dbReference type="NCBIfam" id="TIGR02349">
    <property type="entry name" value="DnaJ_bact"/>
    <property type="match status" value="1"/>
</dbReference>
<dbReference type="NCBIfam" id="NF008035">
    <property type="entry name" value="PRK10767.1"/>
    <property type="match status" value="1"/>
</dbReference>
<dbReference type="NCBIfam" id="NF010869">
    <property type="entry name" value="PRK14276.1"/>
    <property type="match status" value="1"/>
</dbReference>
<dbReference type="NCBIfam" id="NF010873">
    <property type="entry name" value="PRK14280.1"/>
    <property type="match status" value="1"/>
</dbReference>
<dbReference type="PANTHER" id="PTHR43096:SF48">
    <property type="entry name" value="CHAPERONE PROTEIN DNAJ"/>
    <property type="match status" value="1"/>
</dbReference>
<dbReference type="PANTHER" id="PTHR43096">
    <property type="entry name" value="DNAJ HOMOLOG 1, MITOCHONDRIAL-RELATED"/>
    <property type="match status" value="1"/>
</dbReference>
<dbReference type="Pfam" id="PF00226">
    <property type="entry name" value="DnaJ"/>
    <property type="match status" value="1"/>
</dbReference>
<dbReference type="Pfam" id="PF01556">
    <property type="entry name" value="DnaJ_C"/>
    <property type="match status" value="1"/>
</dbReference>
<dbReference type="Pfam" id="PF00684">
    <property type="entry name" value="DnaJ_CXXCXGXG"/>
    <property type="match status" value="1"/>
</dbReference>
<dbReference type="PRINTS" id="PR00625">
    <property type="entry name" value="JDOMAIN"/>
</dbReference>
<dbReference type="SMART" id="SM00271">
    <property type="entry name" value="DnaJ"/>
    <property type="match status" value="1"/>
</dbReference>
<dbReference type="SUPFAM" id="SSF46565">
    <property type="entry name" value="Chaperone J-domain"/>
    <property type="match status" value="1"/>
</dbReference>
<dbReference type="SUPFAM" id="SSF57938">
    <property type="entry name" value="DnaJ/Hsp40 cysteine-rich domain"/>
    <property type="match status" value="1"/>
</dbReference>
<dbReference type="SUPFAM" id="SSF49493">
    <property type="entry name" value="HSP40/DnaJ peptide-binding domain"/>
    <property type="match status" value="2"/>
</dbReference>
<dbReference type="PROSITE" id="PS00636">
    <property type="entry name" value="DNAJ_1"/>
    <property type="match status" value="1"/>
</dbReference>
<dbReference type="PROSITE" id="PS50076">
    <property type="entry name" value="DNAJ_2"/>
    <property type="match status" value="1"/>
</dbReference>
<dbReference type="PROSITE" id="PS51188">
    <property type="entry name" value="ZF_CR"/>
    <property type="match status" value="1"/>
</dbReference>
<name>DNAJ_GEOTN</name>
<gene>
    <name evidence="1" type="primary">dnaJ</name>
    <name type="ordered locus">GTNG_2439</name>
</gene>
<evidence type="ECO:0000255" key="1">
    <source>
        <dbReference type="HAMAP-Rule" id="MF_01152"/>
    </source>
</evidence>
<evidence type="ECO:0000256" key="2">
    <source>
        <dbReference type="SAM" id="MobiDB-lite"/>
    </source>
</evidence>
<reference key="1">
    <citation type="journal article" date="2007" name="Proc. Natl. Acad. Sci. U.S.A.">
        <title>Genome and proteome of long-chain alkane degrading Geobacillus thermodenitrificans NG80-2 isolated from a deep-subsurface oil reservoir.</title>
        <authorList>
            <person name="Feng L."/>
            <person name="Wang W."/>
            <person name="Cheng J."/>
            <person name="Ren Y."/>
            <person name="Zhao G."/>
            <person name="Gao C."/>
            <person name="Tang Y."/>
            <person name="Liu X."/>
            <person name="Han W."/>
            <person name="Peng X."/>
            <person name="Liu R."/>
            <person name="Wang L."/>
        </authorList>
    </citation>
    <scope>NUCLEOTIDE SEQUENCE [LARGE SCALE GENOMIC DNA]</scope>
    <source>
        <strain>NG80-2</strain>
    </source>
</reference>
<sequence>MAKRDYYEVLGVSKNATKDEIKKAYRKLSKQYHPDINKAPDAAEKFKEIKEAYEVLSDDEKRARYDRFGHADPNEAFGGGFQGGGFDFGGFSGFGGFEDIFETFFGGGSRRRASGPRKGADLEYMMTLTFEEAAFGKETEIEVPHEETCDTCHGSGAKPGTSPQSCPHCHGSGQVTSEQATPFGRIVNRRTCPVCGGTGRHIPEKCPTCGGTGHVKKRKKIHVKIPAGVDDGQQLRVAGKGEPGVNGGPPGDLYIIFRVQPHEFFKRDGDDIYCEVPLSFAQAALGDEIEVPTLHGDVKLKIPAGTQTGTRFRLKGKGVPNVRGYGQGDQHVIVRVVTPTKLTEKQKQLLREFDRLGGETMHDGSHGRFFEKVKKAFKGET</sequence>
<protein>
    <recommendedName>
        <fullName evidence="1">Chaperone protein DnaJ</fullName>
    </recommendedName>
</protein>
<organism>
    <name type="scientific">Geobacillus thermodenitrificans (strain NG80-2)</name>
    <dbReference type="NCBI Taxonomy" id="420246"/>
    <lineage>
        <taxon>Bacteria</taxon>
        <taxon>Bacillati</taxon>
        <taxon>Bacillota</taxon>
        <taxon>Bacilli</taxon>
        <taxon>Bacillales</taxon>
        <taxon>Anoxybacillaceae</taxon>
        <taxon>Geobacillus</taxon>
    </lineage>
</organism>
<proteinExistence type="inferred from homology"/>
<accession>A4IR30</accession>
<keyword id="KW-0143">Chaperone</keyword>
<keyword id="KW-0963">Cytoplasm</keyword>
<keyword id="KW-0235">DNA replication</keyword>
<keyword id="KW-0479">Metal-binding</keyword>
<keyword id="KW-0677">Repeat</keyword>
<keyword id="KW-0346">Stress response</keyword>
<keyword id="KW-0862">Zinc</keyword>
<keyword id="KW-0863">Zinc-finger</keyword>